<evidence type="ECO:0000255" key="1"/>
<evidence type="ECO:0000269" key="2">
    <source>
    </source>
</evidence>
<evidence type="ECO:0000269" key="3">
    <source>
    </source>
</evidence>
<evidence type="ECO:0000269" key="4">
    <source>
    </source>
</evidence>
<evidence type="ECO:0000269" key="5">
    <source>
    </source>
</evidence>
<evidence type="ECO:0000303" key="6">
    <source>
    </source>
</evidence>
<evidence type="ECO:0000303" key="7">
    <source>
    </source>
</evidence>
<evidence type="ECO:0000305" key="8"/>
<evidence type="ECO:0000305" key="9">
    <source>
    </source>
</evidence>
<organism>
    <name type="scientific">Arabidopsis thaliana</name>
    <name type="common">Mouse-ear cress</name>
    <dbReference type="NCBI Taxonomy" id="3702"/>
    <lineage>
        <taxon>Eukaryota</taxon>
        <taxon>Viridiplantae</taxon>
        <taxon>Streptophyta</taxon>
        <taxon>Embryophyta</taxon>
        <taxon>Tracheophyta</taxon>
        <taxon>Spermatophyta</taxon>
        <taxon>Magnoliopsida</taxon>
        <taxon>eudicotyledons</taxon>
        <taxon>Gunneridae</taxon>
        <taxon>Pentapetalae</taxon>
        <taxon>rosids</taxon>
        <taxon>malvids</taxon>
        <taxon>Brassicales</taxon>
        <taxon>Brassicaceae</taxon>
        <taxon>Camelineae</taxon>
        <taxon>Arabidopsis</taxon>
    </lineage>
</organism>
<sequence length="512" mass="56499">MNARALLCSSNIHSLYTSNRPPEKTSSSRSLRNLKPSPKSLRVWIYPRNRSSVFRVLVRSSDKSESSNSYYVEGDKVSGNNDVVSDSPSSIVLPWWEEFPKRWVIVLLCFSAFLLCNMDRVNMSIAILPMSAEYGWNPATVGLIQSSFFWGYLLTQIAGGIWADTVGGKRVLGFGVIWWSIATILTPVAAKLGLPYLLVVRAFMGVGEGVAMPAMNNILSKWVPVQERSRSLALVYSGMYLGSVTGLAFSPFLIHQFGWPSVFYSFGSLGTVWLTLWLTKAESSPLEDPTLLPEERKLIADNCASKEPVKSIPWRLILSKPPVWALISCHFCHNWGTFILLTWMPTYYHQVLKFNLMESGLLSVFPWMTMAISANAGGWIADTLVSRGFSVTNVRKIMQTIGFLGPAFFLTQLKHIDSPTMAVLCMACSQGTDAFSQSGLYSNHQDIAPRYSGVLLGLSNTAGVLAGVLGTAATGHILQHGSWDDVFTISVGLYLVGTVIWNLFSTGEKIID</sequence>
<proteinExistence type="evidence at protein level"/>
<keyword id="KW-0025">Alternative splicing</keyword>
<keyword id="KW-0150">Chloroplast</keyword>
<keyword id="KW-0406">Ion transport</keyword>
<keyword id="KW-0472">Membrane</keyword>
<keyword id="KW-0934">Plastid</keyword>
<keyword id="KW-1185">Reference proteome</keyword>
<keyword id="KW-0915">Sodium</keyword>
<keyword id="KW-0739">Sodium transport</keyword>
<keyword id="KW-0769">Symport</keyword>
<keyword id="KW-0793">Thylakoid</keyword>
<keyword id="KW-0809">Transit peptide</keyword>
<keyword id="KW-0812">Transmembrane</keyword>
<keyword id="KW-1133">Transmembrane helix</keyword>
<keyword id="KW-0813">Transport</keyword>
<protein>
    <recommendedName>
        <fullName>Sodium-dependent phosphate transport protein 1, chloroplastic</fullName>
    </recommendedName>
    <alternativeName>
        <fullName>Anion transporter 1</fullName>
    </alternativeName>
    <alternativeName>
        <fullName>Na(+)/PI cotransporter 1</fullName>
    </alternativeName>
    <alternativeName>
        <fullName>Phosphate transporter PHT4;1</fullName>
    </alternativeName>
    <alternativeName>
        <fullName>Sodium/phosphate cotransporter 1</fullName>
    </alternativeName>
</protein>
<comment type="function">
    <text evidence="3 4 9">Specific for inorganic phosphate transport across the thylakoid membrane in a sodium dependent manner. Binds glutamate but cannot transport it. May act as an ascorbate transporter at the thylakoid membrane (Probable).</text>
</comment>
<comment type="biophysicochemical properties">
    <kinetics>
        <KM evidence="4">1.17 mM for sodium</KM>
        <KM evidence="4">78.7 uM for inorganic phosphate</KM>
        <Vmax evidence="4">99.15 nmol/h/mg enzyme toward sodium</Vmax>
        <Vmax evidence="4">161.0 nmol/h/mg enzyme toward inorganic phosphate</Vmax>
    </kinetics>
    <phDependence>
        <text evidence="4">Optimum pH is 7.5.</text>
    </phDependence>
</comment>
<comment type="subcellular location">
    <subcellularLocation>
        <location evidence="2 4">Plastid</location>
        <location evidence="2 4">Chloroplast thylakoid membrane</location>
        <topology evidence="2 4">Multi-pass membrane protein</topology>
    </subcellularLocation>
</comment>
<comment type="alternative products">
    <event type="alternative splicing"/>
    <isoform>
        <id>O82390-1</id>
        <name>1</name>
        <sequence type="displayed"/>
    </isoform>
    <isoform>
        <id>O82390-2</id>
        <name>2</name>
        <sequence type="described" ref="VSP_033252 VSP_033253"/>
    </isoform>
    <isoform>
        <id>O82390-3</id>
        <name>3</name>
        <sequence type="described" ref="VSP_033250 VSP_033251"/>
    </isoform>
</comment>
<comment type="tissue specificity">
    <text evidence="4 5">Expressed in flower buds, sepals of mature flowers and mature leaves, less in senescent leaves and at low levels in roots.</text>
</comment>
<comment type="induction">
    <text evidence="5">Expressed with a circadian rhythm showing a peak during the middle of the day (under long day conditions).</text>
</comment>
<comment type="miscellaneous">
    <molecule>Isoform 2</molecule>
    <text evidence="8">May be due to a competing acceptor splice site.</text>
</comment>
<comment type="miscellaneous">
    <molecule>Isoform 3</molecule>
    <text evidence="8">May be due to a competing donor splice site.</text>
</comment>
<comment type="similarity">
    <text evidence="8">Belongs to the major facilitator superfamily. Sodium/anion cotransporter (TC 2.A.1.14) family.</text>
</comment>
<name>ANTR1_ARATH</name>
<gene>
    <name type="primary">ANTR1</name>
    <name type="synonym">PHT4;1</name>
    <name type="ordered locus">At2g29650</name>
    <name type="ORF">T27A16.25</name>
</gene>
<reference key="1">
    <citation type="journal article" date="1999" name="Nature">
        <title>Sequence and analysis of chromosome 2 of the plant Arabidopsis thaliana.</title>
        <authorList>
            <person name="Lin X."/>
            <person name="Kaul S."/>
            <person name="Rounsley S.D."/>
            <person name="Shea T.P."/>
            <person name="Benito M.-I."/>
            <person name="Town C.D."/>
            <person name="Fujii C.Y."/>
            <person name="Mason T.M."/>
            <person name="Bowman C.L."/>
            <person name="Barnstead M.E."/>
            <person name="Feldblyum T.V."/>
            <person name="Buell C.R."/>
            <person name="Ketchum K.A."/>
            <person name="Lee J.J."/>
            <person name="Ronning C.M."/>
            <person name="Koo H.L."/>
            <person name="Moffat K.S."/>
            <person name="Cronin L.A."/>
            <person name="Shen M."/>
            <person name="Pai G."/>
            <person name="Van Aken S."/>
            <person name="Umayam L."/>
            <person name="Tallon L.J."/>
            <person name="Gill J.E."/>
            <person name="Adams M.D."/>
            <person name="Carrera A.J."/>
            <person name="Creasy T.H."/>
            <person name="Goodman H.M."/>
            <person name="Somerville C.R."/>
            <person name="Copenhaver G.P."/>
            <person name="Preuss D."/>
            <person name="Nierman W.C."/>
            <person name="White O."/>
            <person name="Eisen J.A."/>
            <person name="Salzberg S.L."/>
            <person name="Fraser C.M."/>
            <person name="Venter J.C."/>
        </authorList>
    </citation>
    <scope>NUCLEOTIDE SEQUENCE [LARGE SCALE GENOMIC DNA]</scope>
    <source>
        <strain>cv. Columbia</strain>
    </source>
</reference>
<reference key="2">
    <citation type="journal article" date="2017" name="Plant J.">
        <title>Araport11: a complete reannotation of the Arabidopsis thaliana reference genome.</title>
        <authorList>
            <person name="Cheng C.Y."/>
            <person name="Krishnakumar V."/>
            <person name="Chan A.P."/>
            <person name="Thibaud-Nissen F."/>
            <person name="Schobel S."/>
            <person name="Town C.D."/>
        </authorList>
    </citation>
    <scope>GENOME REANNOTATION</scope>
    <source>
        <strain>cv. Columbia</strain>
    </source>
</reference>
<reference key="3">
    <citation type="journal article" date="2003" name="Science">
        <title>Empirical analysis of transcriptional activity in the Arabidopsis genome.</title>
        <authorList>
            <person name="Yamada K."/>
            <person name="Lim J."/>
            <person name="Dale J.M."/>
            <person name="Chen H."/>
            <person name="Shinn P."/>
            <person name="Palm C.J."/>
            <person name="Southwick A.M."/>
            <person name="Wu H.C."/>
            <person name="Kim C.J."/>
            <person name="Nguyen M."/>
            <person name="Pham P.K."/>
            <person name="Cheuk R.F."/>
            <person name="Karlin-Newmann G."/>
            <person name="Liu S.X."/>
            <person name="Lam B."/>
            <person name="Sakano H."/>
            <person name="Wu T."/>
            <person name="Yu G."/>
            <person name="Miranda M."/>
            <person name="Quach H.L."/>
            <person name="Tripp M."/>
            <person name="Chang C.H."/>
            <person name="Lee J.M."/>
            <person name="Toriumi M.J."/>
            <person name="Chan M.M."/>
            <person name="Tang C.C."/>
            <person name="Onodera C.S."/>
            <person name="Deng J.M."/>
            <person name="Akiyama K."/>
            <person name="Ansari Y."/>
            <person name="Arakawa T."/>
            <person name="Banh J."/>
            <person name="Banno F."/>
            <person name="Bowser L."/>
            <person name="Brooks S.Y."/>
            <person name="Carninci P."/>
            <person name="Chao Q."/>
            <person name="Choy N."/>
            <person name="Enju A."/>
            <person name="Goldsmith A.D."/>
            <person name="Gurjal M."/>
            <person name="Hansen N.F."/>
            <person name="Hayashizaki Y."/>
            <person name="Johnson-Hopson C."/>
            <person name="Hsuan V.W."/>
            <person name="Iida K."/>
            <person name="Karnes M."/>
            <person name="Khan S."/>
            <person name="Koesema E."/>
            <person name="Ishida J."/>
            <person name="Jiang P.X."/>
            <person name="Jones T."/>
            <person name="Kawai J."/>
            <person name="Kamiya A."/>
            <person name="Meyers C."/>
            <person name="Nakajima M."/>
            <person name="Narusaka M."/>
            <person name="Seki M."/>
            <person name="Sakurai T."/>
            <person name="Satou M."/>
            <person name="Tamse R."/>
            <person name="Vaysberg M."/>
            <person name="Wallender E.K."/>
            <person name="Wong C."/>
            <person name="Yamamura Y."/>
            <person name="Yuan S."/>
            <person name="Shinozaki K."/>
            <person name="Davis R.W."/>
            <person name="Theologis A."/>
            <person name="Ecker J.R."/>
        </authorList>
    </citation>
    <scope>NUCLEOTIDE SEQUENCE [LARGE SCALE MRNA] (ISOFORMS 1 AND 2)</scope>
    <source>
        <strain>cv. Columbia</strain>
    </source>
</reference>
<reference key="4">
    <citation type="journal article" date="2004" name="Genome Res.">
        <title>Whole genome sequence comparisons and 'full-length' cDNA sequences: a combined approach to evaluate and improve Arabidopsis genome annotation.</title>
        <authorList>
            <person name="Castelli V."/>
            <person name="Aury J.-M."/>
            <person name="Jaillon O."/>
            <person name="Wincker P."/>
            <person name="Clepet C."/>
            <person name="Menard M."/>
            <person name="Cruaud C."/>
            <person name="Quetier F."/>
            <person name="Scarpelli C."/>
            <person name="Schaechter V."/>
            <person name="Temple G."/>
            <person name="Caboche M."/>
            <person name="Weissenbach J."/>
            <person name="Salanoubat M."/>
        </authorList>
    </citation>
    <scope>NUCLEOTIDE SEQUENCE [LARGE SCALE MRNA] (ISOFORM 3)</scope>
    <source>
        <strain>cv. Columbia</strain>
    </source>
</reference>
<reference key="5">
    <citation type="journal article" date="2004" name="Planta">
        <title>Characterization of a protein of the plastid inner envelope having homology to animal inorganic phosphate, chloride and organic-anion transporters.</title>
        <authorList>
            <person name="Roth C."/>
            <person name="Menzel G."/>
            <person name="Petetot J.M."/>
            <person name="Rochat-Hacker S."/>
            <person name="Poirier Y."/>
        </authorList>
    </citation>
    <scope>SUBCELLULAR LOCATION</scope>
    <scope>GENE FAMILY</scope>
    <scope>NOMENCLATURE</scope>
</reference>
<reference key="6">
    <citation type="journal article" date="2008" name="J. Biol. Chem.">
        <title>Arabidopsis ANTR1 is a thylakoid Na+-dependent phosphate transporter: functional characterization in Escherichia coli.</title>
        <authorList>
            <person name="Pavon L.R."/>
            <person name="Lundh F."/>
            <person name="Lundin B."/>
            <person name="Mishra A."/>
            <person name="Persson B.L."/>
            <person name="Spetea C."/>
        </authorList>
    </citation>
    <scope>FUNCTION</scope>
    <scope>SUBCELLULAR LOCATION</scope>
    <scope>TISSUE SPECIFICITY</scope>
    <scope>BIOPHYSICOCHEMICAL PROPERTIES</scope>
</reference>
<reference key="7">
    <citation type="journal article" date="2008" name="New Phytol.">
        <title>Functional analysis of the Arabidopsis PHT4 family of intracellular phosphate transporters.</title>
        <authorList>
            <person name="Guo B."/>
            <person name="Jin Y."/>
            <person name="Wussler C."/>
            <person name="Blancaflor E.B."/>
            <person name="Motes C.M."/>
            <person name="Versaw W.K."/>
        </authorList>
    </citation>
    <scope>FUNCTION</scope>
</reference>
<reference key="8">
    <citation type="journal article" date="2008" name="Plant Signal. Behav.">
        <title>Differential expression and phylogenetic analysis suggest specialization of plastid-localized members of the PHT4 phosphate transporter family for photosynthetic and heterotrophic tissues.</title>
        <authorList>
            <person name="Guo B."/>
            <person name="Irigoyen S."/>
            <person name="Fowler T.B."/>
            <person name="Versaw W.K."/>
        </authorList>
    </citation>
    <scope>TISSUE SPECIFICITY</scope>
    <scope>INDUCTION</scope>
</reference>
<reference key="9">
    <citation type="journal article" date="2015" name="Nat. Commun.">
        <title>AtPHT4;4 is a chloroplast-localized ascorbate transporter in Arabidopsis.</title>
        <authorList>
            <person name="Miyaji T."/>
            <person name="Kuromori T."/>
            <person name="Takeuchi Y."/>
            <person name="Yamaji N."/>
            <person name="Yokosho K."/>
            <person name="Shimazawa A."/>
            <person name="Sugimoto E."/>
            <person name="Omote H."/>
            <person name="Ma J.F."/>
            <person name="Shinozaki K."/>
            <person name="Moriyama Y."/>
        </authorList>
    </citation>
    <scope>FUNCTION</scope>
</reference>
<feature type="transit peptide" description="Chloroplast" evidence="1">
    <location>
        <begin position="1"/>
        <end position="59"/>
    </location>
</feature>
<feature type="chain" id="PRO_0000331534" description="Sodium-dependent phosphate transport protein 1, chloroplastic">
    <location>
        <begin position="60"/>
        <end position="512"/>
    </location>
</feature>
<feature type="transmembrane region" description="Helical" evidence="1">
    <location>
        <begin position="103"/>
        <end position="123"/>
    </location>
</feature>
<feature type="transmembrane region" description="Helical" evidence="1">
    <location>
        <begin position="141"/>
        <end position="161"/>
    </location>
</feature>
<feature type="transmembrane region" description="Helical" evidence="1">
    <location>
        <begin position="171"/>
        <end position="191"/>
    </location>
</feature>
<feature type="transmembrane region" description="Helical" evidence="1">
    <location>
        <begin position="192"/>
        <end position="212"/>
    </location>
</feature>
<feature type="transmembrane region" description="Helical" evidence="1">
    <location>
        <begin position="234"/>
        <end position="254"/>
    </location>
</feature>
<feature type="transmembrane region" description="Helical" evidence="1">
    <location>
        <begin position="257"/>
        <end position="277"/>
    </location>
</feature>
<feature type="transmembrane region" description="Helical" evidence="1">
    <location>
        <begin position="323"/>
        <end position="343"/>
    </location>
</feature>
<feature type="transmembrane region" description="Helical" evidence="1">
    <location>
        <begin position="361"/>
        <end position="381"/>
    </location>
</feature>
<feature type="transmembrane region" description="Helical" evidence="1">
    <location>
        <begin position="401"/>
        <end position="421"/>
    </location>
</feature>
<feature type="transmembrane region" description="Helical" evidence="1">
    <location>
        <begin position="453"/>
        <end position="473"/>
    </location>
</feature>
<feature type="transmembrane region" description="Helical" evidence="1">
    <location>
        <begin position="486"/>
        <end position="506"/>
    </location>
</feature>
<feature type="splice variant" id="VSP_033250" description="In isoform 3." evidence="7">
    <location>
        <begin position="1"/>
        <end position="112"/>
    </location>
</feature>
<feature type="splice variant" id="VSP_033251" description="In isoform 3." evidence="7">
    <original>FLLCNMDR</original>
    <variation>MVGRVSEA</variation>
    <location>
        <begin position="113"/>
        <end position="120"/>
    </location>
</feature>
<feature type="splice variant" id="VSP_033252" description="In isoform 2." evidence="6">
    <original>IM</original>
    <variation>FL</variation>
    <location>
        <begin position="397"/>
        <end position="398"/>
    </location>
</feature>
<feature type="splice variant" id="VSP_033253" description="In isoform 2." evidence="6">
    <location>
        <begin position="399"/>
        <end position="512"/>
    </location>
</feature>
<feature type="sequence conflict" description="In Ref. 3; AAM48002/AAL32642." evidence="8" ref="3">
    <original>W</original>
    <variation>R</variation>
    <location>
        <position position="314"/>
    </location>
</feature>
<feature type="sequence conflict" description="In Ref. 4." evidence="8" ref="4">
    <original>H</original>
    <variation>N</variation>
    <location>
        <position position="476"/>
    </location>
</feature>
<dbReference type="EMBL" id="AC005496">
    <property type="protein sequence ID" value="AAC35230.1"/>
    <property type="molecule type" value="Genomic_DNA"/>
</dbReference>
<dbReference type="EMBL" id="CP002685">
    <property type="protein sequence ID" value="AEC08285.1"/>
    <property type="molecule type" value="Genomic_DNA"/>
</dbReference>
<dbReference type="EMBL" id="CP002685">
    <property type="protein sequence ID" value="AEC08286.1"/>
    <property type="molecule type" value="Genomic_DNA"/>
</dbReference>
<dbReference type="EMBL" id="CP002685">
    <property type="protein sequence ID" value="AEC08287.1"/>
    <property type="molecule type" value="Genomic_DNA"/>
</dbReference>
<dbReference type="EMBL" id="AY062564">
    <property type="protein sequence ID" value="AAL32642.1"/>
    <property type="molecule type" value="mRNA"/>
</dbReference>
<dbReference type="EMBL" id="AY114683">
    <property type="protein sequence ID" value="AAM48002.1"/>
    <property type="molecule type" value="mRNA"/>
</dbReference>
<dbReference type="EMBL" id="BT001983">
    <property type="protein sequence ID" value="AAN71994.1"/>
    <property type="molecule type" value="mRNA"/>
</dbReference>
<dbReference type="EMBL" id="BT008489">
    <property type="protein sequence ID" value="AAP37848.1"/>
    <property type="molecule type" value="mRNA"/>
</dbReference>
<dbReference type="EMBL" id="BX820656">
    <property type="status" value="NOT_ANNOTATED_CDS"/>
    <property type="molecule type" value="mRNA"/>
</dbReference>
<dbReference type="PIR" id="H84698">
    <property type="entry name" value="H84698"/>
</dbReference>
<dbReference type="RefSeq" id="NP_180526.1">
    <molecule id="O82390-1"/>
    <property type="nucleotide sequence ID" value="NM_128519.6"/>
</dbReference>
<dbReference type="RefSeq" id="NP_850136.1">
    <molecule id="O82390-2"/>
    <property type="nucleotide sequence ID" value="NM_179805.2"/>
</dbReference>
<dbReference type="RefSeq" id="NP_973561.1">
    <molecule id="O82390-3"/>
    <property type="nucleotide sequence ID" value="NM_201832.1"/>
</dbReference>
<dbReference type="SMR" id="O82390"/>
<dbReference type="BioGRID" id="2865">
    <property type="interactions" value="31"/>
</dbReference>
<dbReference type="FunCoup" id="O82390">
    <property type="interactions" value="836"/>
</dbReference>
<dbReference type="IntAct" id="O82390">
    <property type="interactions" value="31"/>
</dbReference>
<dbReference type="STRING" id="3702.O82390"/>
<dbReference type="TCDB" id="2.A.1.14.22">
    <property type="family name" value="the major facilitator superfamily (mfs)"/>
</dbReference>
<dbReference type="PaxDb" id="3702-AT2G29650.1"/>
<dbReference type="ProteomicsDB" id="245056">
    <molecule id="O82390-1"/>
</dbReference>
<dbReference type="EnsemblPlants" id="AT2G29650.1">
    <molecule id="O82390-1"/>
    <property type="protein sequence ID" value="AT2G29650.1"/>
    <property type="gene ID" value="AT2G29650"/>
</dbReference>
<dbReference type="EnsemblPlants" id="AT2G29650.2">
    <molecule id="O82390-2"/>
    <property type="protein sequence ID" value="AT2G29650.2"/>
    <property type="gene ID" value="AT2G29650"/>
</dbReference>
<dbReference type="EnsemblPlants" id="AT2G29650.3">
    <molecule id="O82390-3"/>
    <property type="protein sequence ID" value="AT2G29650.3"/>
    <property type="gene ID" value="AT2G29650"/>
</dbReference>
<dbReference type="GeneID" id="817515"/>
<dbReference type="Gramene" id="AT2G29650.1">
    <molecule id="O82390-1"/>
    <property type="protein sequence ID" value="AT2G29650.1"/>
    <property type="gene ID" value="AT2G29650"/>
</dbReference>
<dbReference type="Gramene" id="AT2G29650.2">
    <molecule id="O82390-2"/>
    <property type="protein sequence ID" value="AT2G29650.2"/>
    <property type="gene ID" value="AT2G29650"/>
</dbReference>
<dbReference type="Gramene" id="AT2G29650.3">
    <molecule id="O82390-3"/>
    <property type="protein sequence ID" value="AT2G29650.3"/>
    <property type="gene ID" value="AT2G29650"/>
</dbReference>
<dbReference type="KEGG" id="ath:AT2G29650"/>
<dbReference type="Araport" id="AT2G29650"/>
<dbReference type="TAIR" id="AT2G29650">
    <property type="gene designation" value="PHT4"/>
</dbReference>
<dbReference type="eggNOG" id="KOG2532">
    <property type="taxonomic scope" value="Eukaryota"/>
</dbReference>
<dbReference type="InParanoid" id="O82390"/>
<dbReference type="OMA" id="RVVTTWF"/>
<dbReference type="PhylomeDB" id="O82390"/>
<dbReference type="BRENDA" id="7.3.2.1">
    <property type="organism ID" value="399"/>
</dbReference>
<dbReference type="SABIO-RK" id="O82390"/>
<dbReference type="PRO" id="PR:O82390"/>
<dbReference type="Proteomes" id="UP000006548">
    <property type="component" value="Chromosome 2"/>
</dbReference>
<dbReference type="ExpressionAtlas" id="O82390">
    <property type="expression patterns" value="baseline and differential"/>
</dbReference>
<dbReference type="GO" id="GO:0009535">
    <property type="term" value="C:chloroplast thylakoid membrane"/>
    <property type="evidence" value="ECO:0000314"/>
    <property type="project" value="UniProtKB"/>
</dbReference>
<dbReference type="GO" id="GO:0009579">
    <property type="term" value="C:thylakoid"/>
    <property type="evidence" value="ECO:0000314"/>
    <property type="project" value="TAIR"/>
</dbReference>
<dbReference type="GO" id="GO:0005315">
    <property type="term" value="F:phosphate transmembrane transporter activity"/>
    <property type="evidence" value="ECO:0000314"/>
    <property type="project" value="TAIR"/>
</dbReference>
<dbReference type="GO" id="GO:0015293">
    <property type="term" value="F:symporter activity"/>
    <property type="evidence" value="ECO:0007669"/>
    <property type="project" value="UniProtKB-KW"/>
</dbReference>
<dbReference type="GO" id="GO:0009416">
    <property type="term" value="P:response to light stimulus"/>
    <property type="evidence" value="ECO:0000270"/>
    <property type="project" value="TAIR"/>
</dbReference>
<dbReference type="GO" id="GO:0009624">
    <property type="term" value="P:response to nematode"/>
    <property type="evidence" value="ECO:0007007"/>
    <property type="project" value="TAIR"/>
</dbReference>
<dbReference type="GO" id="GO:0006814">
    <property type="term" value="P:sodium ion transport"/>
    <property type="evidence" value="ECO:0007669"/>
    <property type="project" value="UniProtKB-KW"/>
</dbReference>
<dbReference type="CDD" id="cd17380">
    <property type="entry name" value="MFS_SLC17A9_like"/>
    <property type="match status" value="1"/>
</dbReference>
<dbReference type="FunFam" id="1.20.1250.20:FF:000058">
    <property type="entry name" value="ascorbate transporter, chloroplastic isoform X1"/>
    <property type="match status" value="1"/>
</dbReference>
<dbReference type="FunFam" id="1.20.1250.20:FF:000086">
    <property type="entry name" value="ascorbate transporter, chloroplastic isoform X2"/>
    <property type="match status" value="1"/>
</dbReference>
<dbReference type="Gene3D" id="1.20.1250.20">
    <property type="entry name" value="MFS general substrate transporter like domains"/>
    <property type="match status" value="2"/>
</dbReference>
<dbReference type="InterPro" id="IPR011701">
    <property type="entry name" value="MFS"/>
</dbReference>
<dbReference type="InterPro" id="IPR020846">
    <property type="entry name" value="MFS_dom"/>
</dbReference>
<dbReference type="InterPro" id="IPR050382">
    <property type="entry name" value="MFS_Na/Anion_cotransporter"/>
</dbReference>
<dbReference type="InterPro" id="IPR036259">
    <property type="entry name" value="MFS_trans_sf"/>
</dbReference>
<dbReference type="InterPro" id="IPR044777">
    <property type="entry name" value="SLC17A9-like"/>
</dbReference>
<dbReference type="PANTHER" id="PTHR11662:SF446">
    <property type="entry name" value="SODIUM-DEPENDENT PHOSPHATE TRANSPORT PROTEIN 1, CHLOROPLASTIC"/>
    <property type="match status" value="1"/>
</dbReference>
<dbReference type="PANTHER" id="PTHR11662">
    <property type="entry name" value="SOLUTE CARRIER FAMILY 17"/>
    <property type="match status" value="1"/>
</dbReference>
<dbReference type="Pfam" id="PF07690">
    <property type="entry name" value="MFS_1"/>
    <property type="match status" value="1"/>
</dbReference>
<dbReference type="SUPFAM" id="SSF103473">
    <property type="entry name" value="MFS general substrate transporter"/>
    <property type="match status" value="1"/>
</dbReference>
<dbReference type="PROSITE" id="PS50850">
    <property type="entry name" value="MFS"/>
    <property type="match status" value="1"/>
</dbReference>
<accession>O82390</accession>
<accession>Q3EBS0</accession>
<accession>Q8H0X1</accession>
<accession>Q8W4H0</accession>